<accession>Q82IZ2</accession>
<feature type="chain" id="PRO_0000422014" description="Glyceraldehyde-3-phosphate dehydrogenase 1">
    <location>
        <begin position="1"/>
        <end position="334"/>
    </location>
</feature>
<feature type="active site" description="Nucleophile" evidence="1">
    <location>
        <position position="153"/>
    </location>
</feature>
<feature type="binding site" evidence="1">
    <location>
        <begin position="12"/>
        <end position="13"/>
    </location>
    <ligand>
        <name>NAD(+)</name>
        <dbReference type="ChEBI" id="CHEBI:57540"/>
    </ligand>
</feature>
<feature type="binding site" evidence="1">
    <location>
        <position position="35"/>
    </location>
    <ligand>
        <name>NAD(+)</name>
        <dbReference type="ChEBI" id="CHEBI:57540"/>
    </ligand>
</feature>
<feature type="binding site" evidence="1">
    <location>
        <position position="79"/>
    </location>
    <ligand>
        <name>NAD(+)</name>
        <dbReference type="ChEBI" id="CHEBI:57540"/>
    </ligand>
</feature>
<feature type="binding site" evidence="1">
    <location>
        <begin position="152"/>
        <end position="154"/>
    </location>
    <ligand>
        <name>D-glyceraldehyde 3-phosphate</name>
        <dbReference type="ChEBI" id="CHEBI:59776"/>
    </ligand>
</feature>
<feature type="binding site" evidence="1">
    <location>
        <position position="183"/>
    </location>
    <ligand>
        <name>D-glyceraldehyde 3-phosphate</name>
        <dbReference type="ChEBI" id="CHEBI:59776"/>
    </ligand>
</feature>
<feature type="binding site" evidence="1">
    <location>
        <position position="198"/>
    </location>
    <ligand>
        <name>D-glyceraldehyde 3-phosphate</name>
        <dbReference type="ChEBI" id="CHEBI:59776"/>
    </ligand>
</feature>
<feature type="binding site" evidence="1">
    <location>
        <begin position="211"/>
        <end position="212"/>
    </location>
    <ligand>
        <name>D-glyceraldehyde 3-phosphate</name>
        <dbReference type="ChEBI" id="CHEBI:59776"/>
    </ligand>
</feature>
<feature type="binding site" evidence="1">
    <location>
        <position position="234"/>
    </location>
    <ligand>
        <name>D-glyceraldehyde 3-phosphate</name>
        <dbReference type="ChEBI" id="CHEBI:59776"/>
    </ligand>
</feature>
<feature type="binding site" evidence="1">
    <location>
        <position position="315"/>
    </location>
    <ligand>
        <name>NAD(+)</name>
        <dbReference type="ChEBI" id="CHEBI:57540"/>
    </ligand>
</feature>
<feature type="site" description="Activates thiol group during catalysis" evidence="1">
    <location>
        <position position="180"/>
    </location>
</feature>
<gene>
    <name type="primary">gap1</name>
    <name type="ordered locus">SAV_2990</name>
</gene>
<sequence length="334" mass="35005">MTVRVGINGFGRIGRNVFRAAATRGADLEIVAVNDLGDVATMAHLLAYDSILGRFPEEVTAEPGAIRAGDTTVKVLAERDPAALPWGDLGVDVVIESTGIFTDAAKARAHVDGGAKKVIIAAPASNEDVTVVLGVNQDAYDPERHTIISNASCTTNCLGVLAKVLHDAVGIESGMMTTVHAYTQDQNLQDAPHKDLRRARAAGLNIVPTSSGAAKAIGLVLPELQGRLDAFALRVPVPTGSVTDLTVTASRSTTVEEVKEAYAKAAAGAYKGLLSYTEAPIVSTDIAGDPASCVFDAELTRVLGSQVKVVGWYDNEWGYSNRLIDLALLVGDTL</sequence>
<evidence type="ECO:0000250" key="1">
    <source>
        <dbReference type="UniProtKB" id="P00362"/>
    </source>
</evidence>
<evidence type="ECO:0000250" key="2">
    <source>
        <dbReference type="UniProtKB" id="P54226"/>
    </source>
</evidence>
<evidence type="ECO:0000269" key="3">
    <source>
    </source>
</evidence>
<evidence type="ECO:0000303" key="4">
    <source>
    </source>
</evidence>
<evidence type="ECO:0000305" key="5"/>
<keyword id="KW-0963">Cytoplasm</keyword>
<keyword id="KW-0324">Glycolysis</keyword>
<keyword id="KW-0520">NAD</keyword>
<keyword id="KW-0547">Nucleotide-binding</keyword>
<keyword id="KW-0560">Oxidoreductase</keyword>
<keyword id="KW-1185">Reference proteome</keyword>
<proteinExistence type="evidence at protein level"/>
<dbReference type="EC" id="1.2.1.12" evidence="3"/>
<dbReference type="EMBL" id="BA000030">
    <property type="protein sequence ID" value="BAC70701.1"/>
    <property type="molecule type" value="Genomic_DNA"/>
</dbReference>
<dbReference type="SMR" id="Q82IZ2"/>
<dbReference type="GeneID" id="41540072"/>
<dbReference type="KEGG" id="sma:SAVERM_2990"/>
<dbReference type="eggNOG" id="COG0057">
    <property type="taxonomic scope" value="Bacteria"/>
</dbReference>
<dbReference type="HOGENOM" id="CLU_030140_0_2_11"/>
<dbReference type="OrthoDB" id="9803304at2"/>
<dbReference type="UniPathway" id="UPA00109">
    <property type="reaction ID" value="UER00184"/>
</dbReference>
<dbReference type="Proteomes" id="UP000000428">
    <property type="component" value="Chromosome"/>
</dbReference>
<dbReference type="GO" id="GO:0005737">
    <property type="term" value="C:cytoplasm"/>
    <property type="evidence" value="ECO:0007669"/>
    <property type="project" value="UniProtKB-SubCell"/>
</dbReference>
<dbReference type="GO" id="GO:0004365">
    <property type="term" value="F:glyceraldehyde-3-phosphate dehydrogenase (NAD+) (phosphorylating) activity"/>
    <property type="evidence" value="ECO:0000314"/>
    <property type="project" value="UniProtKB"/>
</dbReference>
<dbReference type="GO" id="GO:0051287">
    <property type="term" value="F:NAD binding"/>
    <property type="evidence" value="ECO:0000314"/>
    <property type="project" value="UniProtKB"/>
</dbReference>
<dbReference type="GO" id="GO:0050661">
    <property type="term" value="F:NADP binding"/>
    <property type="evidence" value="ECO:0007669"/>
    <property type="project" value="InterPro"/>
</dbReference>
<dbReference type="GO" id="GO:0006006">
    <property type="term" value="P:glucose metabolic process"/>
    <property type="evidence" value="ECO:0007669"/>
    <property type="project" value="InterPro"/>
</dbReference>
<dbReference type="GO" id="GO:0006096">
    <property type="term" value="P:glycolytic process"/>
    <property type="evidence" value="ECO:0007669"/>
    <property type="project" value="UniProtKB-UniPathway"/>
</dbReference>
<dbReference type="CDD" id="cd18126">
    <property type="entry name" value="GAPDH_I_C"/>
    <property type="match status" value="1"/>
</dbReference>
<dbReference type="CDD" id="cd05214">
    <property type="entry name" value="GAPDH_I_N"/>
    <property type="match status" value="1"/>
</dbReference>
<dbReference type="FunFam" id="3.30.360.10:FF:000002">
    <property type="entry name" value="Glyceraldehyde-3-phosphate dehydrogenase"/>
    <property type="match status" value="1"/>
</dbReference>
<dbReference type="FunFam" id="3.40.50.720:FF:000001">
    <property type="entry name" value="Glyceraldehyde-3-phosphate dehydrogenase"/>
    <property type="match status" value="1"/>
</dbReference>
<dbReference type="Gene3D" id="3.30.360.10">
    <property type="entry name" value="Dihydrodipicolinate Reductase, domain 2"/>
    <property type="match status" value="1"/>
</dbReference>
<dbReference type="Gene3D" id="3.40.50.720">
    <property type="entry name" value="NAD(P)-binding Rossmann-like Domain"/>
    <property type="match status" value="1"/>
</dbReference>
<dbReference type="InterPro" id="IPR020831">
    <property type="entry name" value="GlycerAld/Erythrose_P_DH"/>
</dbReference>
<dbReference type="InterPro" id="IPR020830">
    <property type="entry name" value="GlycerAld_3-P_DH_AS"/>
</dbReference>
<dbReference type="InterPro" id="IPR020829">
    <property type="entry name" value="GlycerAld_3-P_DH_cat"/>
</dbReference>
<dbReference type="InterPro" id="IPR020828">
    <property type="entry name" value="GlycerAld_3-P_DH_NAD(P)-bd"/>
</dbReference>
<dbReference type="InterPro" id="IPR006424">
    <property type="entry name" value="Glyceraldehyde-3-P_DH_1"/>
</dbReference>
<dbReference type="InterPro" id="IPR036291">
    <property type="entry name" value="NAD(P)-bd_dom_sf"/>
</dbReference>
<dbReference type="NCBIfam" id="TIGR01534">
    <property type="entry name" value="GAPDH-I"/>
    <property type="match status" value="1"/>
</dbReference>
<dbReference type="PANTHER" id="PTHR43148">
    <property type="entry name" value="GLYCERALDEHYDE-3-PHOSPHATE DEHYDROGENASE 2"/>
    <property type="match status" value="1"/>
</dbReference>
<dbReference type="Pfam" id="PF02800">
    <property type="entry name" value="Gp_dh_C"/>
    <property type="match status" value="1"/>
</dbReference>
<dbReference type="Pfam" id="PF00044">
    <property type="entry name" value="Gp_dh_N"/>
    <property type="match status" value="1"/>
</dbReference>
<dbReference type="PIRSF" id="PIRSF000149">
    <property type="entry name" value="GAP_DH"/>
    <property type="match status" value="1"/>
</dbReference>
<dbReference type="PRINTS" id="PR00078">
    <property type="entry name" value="G3PDHDRGNASE"/>
</dbReference>
<dbReference type="SMART" id="SM00846">
    <property type="entry name" value="Gp_dh_N"/>
    <property type="match status" value="1"/>
</dbReference>
<dbReference type="SUPFAM" id="SSF55347">
    <property type="entry name" value="Glyceraldehyde-3-phosphate dehydrogenase-like, C-terminal domain"/>
    <property type="match status" value="1"/>
</dbReference>
<dbReference type="SUPFAM" id="SSF51735">
    <property type="entry name" value="NAD(P)-binding Rossmann-fold domains"/>
    <property type="match status" value="1"/>
</dbReference>
<dbReference type="PROSITE" id="PS00071">
    <property type="entry name" value="GAPDH"/>
    <property type="match status" value="1"/>
</dbReference>
<organism>
    <name type="scientific">Streptomyces avermitilis (strain ATCC 31267 / DSM 46492 / JCM 5070 / NBRC 14893 / NCIMB 12804 / NRRL 8165 / MA-4680)</name>
    <dbReference type="NCBI Taxonomy" id="227882"/>
    <lineage>
        <taxon>Bacteria</taxon>
        <taxon>Bacillati</taxon>
        <taxon>Actinomycetota</taxon>
        <taxon>Actinomycetes</taxon>
        <taxon>Kitasatosporales</taxon>
        <taxon>Streptomycetaceae</taxon>
        <taxon>Streptomyces</taxon>
    </lineage>
</organism>
<name>G3P1_STRAW</name>
<reference key="1">
    <citation type="journal article" date="2001" name="Proc. Natl. Acad. Sci. U.S.A.">
        <title>Genome sequence of an industrial microorganism Streptomyces avermitilis: deducing the ability of producing secondary metabolites.</title>
        <authorList>
            <person name="Omura S."/>
            <person name="Ikeda H."/>
            <person name="Ishikawa J."/>
            <person name="Hanamoto A."/>
            <person name="Takahashi C."/>
            <person name="Shinose M."/>
            <person name="Takahashi Y."/>
            <person name="Horikawa H."/>
            <person name="Nakazawa H."/>
            <person name="Osonoe T."/>
            <person name="Kikuchi H."/>
            <person name="Shiba T."/>
            <person name="Sakaki Y."/>
            <person name="Hattori M."/>
        </authorList>
    </citation>
    <scope>NUCLEOTIDE SEQUENCE [LARGE SCALE GENOMIC DNA]</scope>
    <source>
        <strain>ATCC 31267 / DSM 46492 / JCM 5070 / NBRC 14893 / NCIMB 12804 / NRRL 8165 / MA-4680</strain>
    </source>
</reference>
<reference key="2">
    <citation type="journal article" date="2003" name="Nat. Biotechnol.">
        <title>Complete genome sequence and comparative analysis of the industrial microorganism Streptomyces avermitilis.</title>
        <authorList>
            <person name="Ikeda H."/>
            <person name="Ishikawa J."/>
            <person name="Hanamoto A."/>
            <person name="Shinose M."/>
            <person name="Kikuchi H."/>
            <person name="Shiba T."/>
            <person name="Sakaki Y."/>
            <person name="Hattori M."/>
            <person name="Omura S."/>
        </authorList>
    </citation>
    <scope>NUCLEOTIDE SEQUENCE [LARGE SCALE GENOMIC DNA]</scope>
    <source>
        <strain>ATCC 31267 / DSM 46492 / JCM 5070 / NBRC 14893 / NCIMB 12804 / NRRL 8165 / MA-4680</strain>
    </source>
</reference>
<reference key="3">
    <citation type="journal article" date="2006" name="Biochemistry">
        <title>A gene cluster for biosynthesis of the sesquiterpenoid antibiotic pentalenolactone in Streptomyces avermitilis.</title>
        <authorList>
            <person name="Tetzlaff C.N."/>
            <person name="You Z."/>
            <person name="Cane D.E."/>
            <person name="Takamatsu S."/>
            <person name="Omura S."/>
            <person name="Ikeda H."/>
        </authorList>
    </citation>
    <scope>FUNCTION</scope>
    <scope>CATALYTIC ACTIVITY</scope>
    <scope>ACTIVITY REGULATION</scope>
    <scope>BIOPHYSICOCHEMICAL PROPERTIES</scope>
    <source>
        <strain>ATCC 31267 / DSM 46492 / JCM 5070 / NBRC 14893 / NCIMB 12804 / NRRL 8165 / MA-4680</strain>
    </source>
</reference>
<protein>
    <recommendedName>
        <fullName evidence="4">Glyceraldehyde-3-phosphate dehydrogenase 1</fullName>
        <shortName evidence="4">GAPDH 1</shortName>
        <ecNumber evidence="3">1.2.1.12</ecNumber>
    </recommendedName>
    <alternativeName>
        <fullName evidence="4">NAD-dependent glyceraldehyde-3-phosphate dehydrogenase</fullName>
    </alternativeName>
    <alternativeName>
        <fullName evidence="4">PL-insensitive glyceraldehyde-3-phosphate dehydrogenase</fullName>
    </alternativeName>
</protein>
<comment type="function">
    <text evidence="3">Catalyzes the oxidative phosphorylation of glyceraldehyde 3-phosphate (G3P) to 1,3-bisphosphoglycerate (BPG) using the cofactor NAD. The first reaction step involves the formation of a hemiacetal intermediate between G3P and a cysteine residue, and this hemiacetal intermediate is then oxidized to a thioester, with concomitant reduction of NAD to NADH. The reduced NADH is then exchanged with the second NAD, and the thioester is attacked by a nucleophilic inorganic phosphate to produce BPG.</text>
</comment>
<comment type="catalytic activity">
    <reaction evidence="3">
        <text>D-glyceraldehyde 3-phosphate + phosphate + NAD(+) = (2R)-3-phospho-glyceroyl phosphate + NADH + H(+)</text>
        <dbReference type="Rhea" id="RHEA:10300"/>
        <dbReference type="ChEBI" id="CHEBI:15378"/>
        <dbReference type="ChEBI" id="CHEBI:43474"/>
        <dbReference type="ChEBI" id="CHEBI:57540"/>
        <dbReference type="ChEBI" id="CHEBI:57604"/>
        <dbReference type="ChEBI" id="CHEBI:57945"/>
        <dbReference type="ChEBI" id="CHEBI:59776"/>
        <dbReference type="EC" id="1.2.1.12"/>
    </reaction>
</comment>
<comment type="activity regulation">
    <text evidence="3">Resistant to pentalenolactone.</text>
</comment>
<comment type="biophysicochemical properties">
    <kinetics>
        <KM evidence="3">0.33 mM for D-glyceraldehyde 3-phosphate</KM>
        <text evidence="3">kcat is 33 sec(-1) with D-glyceraldehyde 3-phosphate.</text>
    </kinetics>
</comment>
<comment type="pathway">
    <text evidence="5">Carbohydrate degradation; glycolysis; pyruvate from D-glyceraldehyde 3-phosphate: step 1/5.</text>
</comment>
<comment type="subunit">
    <text evidence="2">Homotetramer.</text>
</comment>
<comment type="subcellular location">
    <subcellularLocation>
        <location evidence="5">Cytoplasm</location>
    </subcellularLocation>
</comment>
<comment type="similarity">
    <text evidence="5">Belongs to the glyceraldehyde-3-phosphate dehydrogenase family.</text>
</comment>